<name>EFG_NOVAD</name>
<evidence type="ECO:0000255" key="1">
    <source>
        <dbReference type="HAMAP-Rule" id="MF_00054"/>
    </source>
</evidence>
<organism>
    <name type="scientific">Novosphingobium aromaticivorans (strain ATCC 700278 / DSM 12444 / CCUG 56034 / CIP 105152 / NBRC 16084 / F199)</name>
    <dbReference type="NCBI Taxonomy" id="279238"/>
    <lineage>
        <taxon>Bacteria</taxon>
        <taxon>Pseudomonadati</taxon>
        <taxon>Pseudomonadota</taxon>
        <taxon>Alphaproteobacteria</taxon>
        <taxon>Sphingomonadales</taxon>
        <taxon>Sphingomonadaceae</taxon>
        <taxon>Novosphingobium</taxon>
    </lineage>
</organism>
<gene>
    <name evidence="1" type="primary">fusA</name>
    <name type="ordered locus">Saro_1246</name>
</gene>
<reference key="1">
    <citation type="submission" date="2006-01" db="EMBL/GenBank/DDBJ databases">
        <title>Complete sequence of Novosphingobium aromaticivorans DSM 12444.</title>
        <authorList>
            <consortium name="US DOE Joint Genome Institute"/>
            <person name="Copeland A."/>
            <person name="Lucas S."/>
            <person name="Lapidus A."/>
            <person name="Barry K."/>
            <person name="Detter J.C."/>
            <person name="Glavina T."/>
            <person name="Hammon N."/>
            <person name="Israni S."/>
            <person name="Pitluck S."/>
            <person name="Chain P."/>
            <person name="Malfatti S."/>
            <person name="Shin M."/>
            <person name="Vergez L."/>
            <person name="Schmutz J."/>
            <person name="Larimer F."/>
            <person name="Land M."/>
            <person name="Kyrpides N."/>
            <person name="Ivanova N."/>
            <person name="Fredrickson J."/>
            <person name="Balkwill D."/>
            <person name="Romine M.F."/>
            <person name="Richardson P."/>
        </authorList>
    </citation>
    <scope>NUCLEOTIDE SEQUENCE [LARGE SCALE GENOMIC DNA]</scope>
    <source>
        <strain>ATCC 700278 / DSM 12444 / CCUG 56034 / CIP 105152 / NBRC 16084 / F199</strain>
    </source>
</reference>
<accession>Q2G8Y3</accession>
<dbReference type="EMBL" id="CP000248">
    <property type="protein sequence ID" value="ABD25690.1"/>
    <property type="molecule type" value="Genomic_DNA"/>
</dbReference>
<dbReference type="RefSeq" id="WP_011444904.1">
    <property type="nucleotide sequence ID" value="NC_007794.1"/>
</dbReference>
<dbReference type="SMR" id="Q2G8Y3"/>
<dbReference type="STRING" id="279238.Saro_1246"/>
<dbReference type="KEGG" id="nar:Saro_1246"/>
<dbReference type="eggNOG" id="COG0480">
    <property type="taxonomic scope" value="Bacteria"/>
</dbReference>
<dbReference type="HOGENOM" id="CLU_002794_4_1_5"/>
<dbReference type="Proteomes" id="UP000009134">
    <property type="component" value="Chromosome"/>
</dbReference>
<dbReference type="GO" id="GO:0005737">
    <property type="term" value="C:cytoplasm"/>
    <property type="evidence" value="ECO:0007669"/>
    <property type="project" value="UniProtKB-SubCell"/>
</dbReference>
<dbReference type="GO" id="GO:0005525">
    <property type="term" value="F:GTP binding"/>
    <property type="evidence" value="ECO:0007669"/>
    <property type="project" value="UniProtKB-UniRule"/>
</dbReference>
<dbReference type="GO" id="GO:0003924">
    <property type="term" value="F:GTPase activity"/>
    <property type="evidence" value="ECO:0007669"/>
    <property type="project" value="InterPro"/>
</dbReference>
<dbReference type="GO" id="GO:0003746">
    <property type="term" value="F:translation elongation factor activity"/>
    <property type="evidence" value="ECO:0007669"/>
    <property type="project" value="UniProtKB-UniRule"/>
</dbReference>
<dbReference type="GO" id="GO:0032790">
    <property type="term" value="P:ribosome disassembly"/>
    <property type="evidence" value="ECO:0007669"/>
    <property type="project" value="TreeGrafter"/>
</dbReference>
<dbReference type="CDD" id="cd01886">
    <property type="entry name" value="EF-G"/>
    <property type="match status" value="1"/>
</dbReference>
<dbReference type="CDD" id="cd16262">
    <property type="entry name" value="EFG_III"/>
    <property type="match status" value="1"/>
</dbReference>
<dbReference type="CDD" id="cd01434">
    <property type="entry name" value="EFG_mtEFG1_IV"/>
    <property type="match status" value="1"/>
</dbReference>
<dbReference type="CDD" id="cd03713">
    <property type="entry name" value="EFG_mtEFG_C"/>
    <property type="match status" value="1"/>
</dbReference>
<dbReference type="CDD" id="cd04088">
    <property type="entry name" value="EFG_mtEFG_II"/>
    <property type="match status" value="1"/>
</dbReference>
<dbReference type="FunFam" id="2.40.30.10:FF:000006">
    <property type="entry name" value="Elongation factor G"/>
    <property type="match status" value="1"/>
</dbReference>
<dbReference type="FunFam" id="3.30.230.10:FF:000003">
    <property type="entry name" value="Elongation factor G"/>
    <property type="match status" value="1"/>
</dbReference>
<dbReference type="FunFam" id="3.30.70.240:FF:000001">
    <property type="entry name" value="Elongation factor G"/>
    <property type="match status" value="1"/>
</dbReference>
<dbReference type="FunFam" id="3.30.70.870:FF:000001">
    <property type="entry name" value="Elongation factor G"/>
    <property type="match status" value="1"/>
</dbReference>
<dbReference type="FunFam" id="3.40.50.300:FF:000029">
    <property type="entry name" value="Elongation factor G"/>
    <property type="match status" value="1"/>
</dbReference>
<dbReference type="Gene3D" id="3.30.230.10">
    <property type="match status" value="1"/>
</dbReference>
<dbReference type="Gene3D" id="3.30.70.240">
    <property type="match status" value="1"/>
</dbReference>
<dbReference type="Gene3D" id="3.30.70.870">
    <property type="entry name" value="Elongation Factor G (Translational Gtpase), domain 3"/>
    <property type="match status" value="1"/>
</dbReference>
<dbReference type="Gene3D" id="3.40.50.300">
    <property type="entry name" value="P-loop containing nucleotide triphosphate hydrolases"/>
    <property type="match status" value="1"/>
</dbReference>
<dbReference type="Gene3D" id="2.40.30.10">
    <property type="entry name" value="Translation factors"/>
    <property type="match status" value="1"/>
</dbReference>
<dbReference type="HAMAP" id="MF_00054_B">
    <property type="entry name" value="EF_G_EF_2_B"/>
    <property type="match status" value="1"/>
</dbReference>
<dbReference type="InterPro" id="IPR053905">
    <property type="entry name" value="EF-G-like_DII"/>
</dbReference>
<dbReference type="InterPro" id="IPR041095">
    <property type="entry name" value="EFG_II"/>
</dbReference>
<dbReference type="InterPro" id="IPR009022">
    <property type="entry name" value="EFG_III"/>
</dbReference>
<dbReference type="InterPro" id="IPR035647">
    <property type="entry name" value="EFG_III/V"/>
</dbReference>
<dbReference type="InterPro" id="IPR047872">
    <property type="entry name" value="EFG_IV"/>
</dbReference>
<dbReference type="InterPro" id="IPR035649">
    <property type="entry name" value="EFG_V"/>
</dbReference>
<dbReference type="InterPro" id="IPR000640">
    <property type="entry name" value="EFG_V-like"/>
</dbReference>
<dbReference type="InterPro" id="IPR031157">
    <property type="entry name" value="G_TR_CS"/>
</dbReference>
<dbReference type="InterPro" id="IPR027417">
    <property type="entry name" value="P-loop_NTPase"/>
</dbReference>
<dbReference type="InterPro" id="IPR020568">
    <property type="entry name" value="Ribosomal_Su5_D2-typ_SF"/>
</dbReference>
<dbReference type="InterPro" id="IPR014721">
    <property type="entry name" value="Ribsml_uS5_D2-typ_fold_subgr"/>
</dbReference>
<dbReference type="InterPro" id="IPR005225">
    <property type="entry name" value="Small_GTP-bd"/>
</dbReference>
<dbReference type="InterPro" id="IPR000795">
    <property type="entry name" value="T_Tr_GTP-bd_dom"/>
</dbReference>
<dbReference type="InterPro" id="IPR009000">
    <property type="entry name" value="Transl_B-barrel_sf"/>
</dbReference>
<dbReference type="InterPro" id="IPR004540">
    <property type="entry name" value="Transl_elong_EFG/EF2"/>
</dbReference>
<dbReference type="InterPro" id="IPR005517">
    <property type="entry name" value="Transl_elong_EFG/EF2_IV"/>
</dbReference>
<dbReference type="NCBIfam" id="TIGR00484">
    <property type="entry name" value="EF-G"/>
    <property type="match status" value="1"/>
</dbReference>
<dbReference type="NCBIfam" id="NF009381">
    <property type="entry name" value="PRK12740.1-5"/>
    <property type="match status" value="1"/>
</dbReference>
<dbReference type="NCBIfam" id="TIGR00231">
    <property type="entry name" value="small_GTP"/>
    <property type="match status" value="1"/>
</dbReference>
<dbReference type="PANTHER" id="PTHR43261:SF1">
    <property type="entry name" value="RIBOSOME-RELEASING FACTOR 2, MITOCHONDRIAL"/>
    <property type="match status" value="1"/>
</dbReference>
<dbReference type="PANTHER" id="PTHR43261">
    <property type="entry name" value="TRANSLATION ELONGATION FACTOR G-RELATED"/>
    <property type="match status" value="1"/>
</dbReference>
<dbReference type="Pfam" id="PF22042">
    <property type="entry name" value="EF-G_D2"/>
    <property type="match status" value="1"/>
</dbReference>
<dbReference type="Pfam" id="PF00679">
    <property type="entry name" value="EFG_C"/>
    <property type="match status" value="1"/>
</dbReference>
<dbReference type="Pfam" id="PF14492">
    <property type="entry name" value="EFG_III"/>
    <property type="match status" value="1"/>
</dbReference>
<dbReference type="Pfam" id="PF03764">
    <property type="entry name" value="EFG_IV"/>
    <property type="match status" value="1"/>
</dbReference>
<dbReference type="Pfam" id="PF00009">
    <property type="entry name" value="GTP_EFTU"/>
    <property type="match status" value="1"/>
</dbReference>
<dbReference type="PRINTS" id="PR00315">
    <property type="entry name" value="ELONGATNFCT"/>
</dbReference>
<dbReference type="SMART" id="SM00838">
    <property type="entry name" value="EFG_C"/>
    <property type="match status" value="1"/>
</dbReference>
<dbReference type="SMART" id="SM00889">
    <property type="entry name" value="EFG_IV"/>
    <property type="match status" value="1"/>
</dbReference>
<dbReference type="SUPFAM" id="SSF54980">
    <property type="entry name" value="EF-G C-terminal domain-like"/>
    <property type="match status" value="2"/>
</dbReference>
<dbReference type="SUPFAM" id="SSF52540">
    <property type="entry name" value="P-loop containing nucleoside triphosphate hydrolases"/>
    <property type="match status" value="1"/>
</dbReference>
<dbReference type="SUPFAM" id="SSF54211">
    <property type="entry name" value="Ribosomal protein S5 domain 2-like"/>
    <property type="match status" value="1"/>
</dbReference>
<dbReference type="SUPFAM" id="SSF50447">
    <property type="entry name" value="Translation proteins"/>
    <property type="match status" value="1"/>
</dbReference>
<dbReference type="PROSITE" id="PS00301">
    <property type="entry name" value="G_TR_1"/>
    <property type="match status" value="1"/>
</dbReference>
<dbReference type="PROSITE" id="PS51722">
    <property type="entry name" value="G_TR_2"/>
    <property type="match status" value="1"/>
</dbReference>
<comment type="function">
    <text evidence="1">Catalyzes the GTP-dependent ribosomal translocation step during translation elongation. During this step, the ribosome changes from the pre-translocational (PRE) to the post-translocational (POST) state as the newly formed A-site-bound peptidyl-tRNA and P-site-bound deacylated tRNA move to the P and E sites, respectively. Catalyzes the coordinated movement of the two tRNA molecules, the mRNA and conformational changes in the ribosome.</text>
</comment>
<comment type="subcellular location">
    <subcellularLocation>
        <location evidence="1">Cytoplasm</location>
    </subcellularLocation>
</comment>
<comment type="similarity">
    <text evidence="1">Belongs to the TRAFAC class translation factor GTPase superfamily. Classic translation factor GTPase family. EF-G/EF-2 subfamily.</text>
</comment>
<proteinExistence type="inferred from homology"/>
<keyword id="KW-0963">Cytoplasm</keyword>
<keyword id="KW-0251">Elongation factor</keyword>
<keyword id="KW-0342">GTP-binding</keyword>
<keyword id="KW-0547">Nucleotide-binding</keyword>
<keyword id="KW-0648">Protein biosynthesis</keyword>
<keyword id="KW-1185">Reference proteome</keyword>
<protein>
    <recommendedName>
        <fullName evidence="1">Elongation factor G</fullName>
        <shortName evidence="1">EF-G</shortName>
    </recommendedName>
</protein>
<feature type="chain" id="PRO_0000263479" description="Elongation factor G">
    <location>
        <begin position="1"/>
        <end position="690"/>
    </location>
</feature>
<feature type="domain" description="tr-type G">
    <location>
        <begin position="8"/>
        <end position="283"/>
    </location>
</feature>
<feature type="binding site" evidence="1">
    <location>
        <begin position="17"/>
        <end position="24"/>
    </location>
    <ligand>
        <name>GTP</name>
        <dbReference type="ChEBI" id="CHEBI:37565"/>
    </ligand>
</feature>
<feature type="binding site" evidence="1">
    <location>
        <begin position="81"/>
        <end position="85"/>
    </location>
    <ligand>
        <name>GTP</name>
        <dbReference type="ChEBI" id="CHEBI:37565"/>
    </ligand>
</feature>
<feature type="binding site" evidence="1">
    <location>
        <begin position="135"/>
        <end position="138"/>
    </location>
    <ligand>
        <name>GTP</name>
        <dbReference type="ChEBI" id="CHEBI:37565"/>
    </ligand>
</feature>
<sequence>MARSHPLERYRNFGIMAHIDAGKTTTTERILYYTGKSYKIGEVHEGAATMDWMEQEQERGITITSAATTCFWNDHRLNIIDTPGHVDFTIEVERSLRVLDGAVAAFDGVAGVEPQSETVWRQADKYGVPRMCYINKLDRTGANFYYCVQTIIDRLGAKPAVLYLPIGAESEFKGLVDLINERAIIWKDESLGAEFFYEDIPADMADKAAEYREKLIELAVEQDDAAMEAYLEGTMPDAATLKALLRKGTLAHAFVPVLCGSSFKNKGVQALLDAVVDFMPSPLDIEDVQGINPDTDEPDSRATSDDAPFSALAFKIMNDPFVGSLTFTRIYSGTLSKGSYLNSVKNKKEKVGRMLLMHANSREDIEEAYAGDIVALAGLKETTTGDTLCSEKQPIILERMEFPEPVIELSVEPKTKADQEKMGIALNRLAAEDPSFRVSTDHESGQTIIKGMGELHLEILVDRMKREFKVEANVGAPQVAYREYLAKAIDLDHTHKKQSGGTGQFGRVKVKVTPGERGSGFVFKDEIKGGNIPKEYIPAIEKGFRETAATGSLIGFPIIDFEVLLYDGAYHDVDSSALAFEICARGAMREAAQKAGIKLLEPIMKVEVITPDEYLGDVIGDINSRRGQIQGTDTRGNAQAVTAMVPLANMFGYVNQLRSFTQGRANYSMFFDHYDEVPANVATELKAKLA</sequence>